<keyword id="KW-0001">2Fe-2S</keyword>
<keyword id="KW-0963">Cytoplasm</keyword>
<keyword id="KW-0903">Direct protein sequencing</keyword>
<keyword id="KW-0274">FAD</keyword>
<keyword id="KW-0285">Flavoprotein</keyword>
<keyword id="KW-0408">Iron</keyword>
<keyword id="KW-0411">Iron-sulfur</keyword>
<keyword id="KW-0443">Lipid metabolism</keyword>
<keyword id="KW-0479">Metal-binding</keyword>
<keyword id="KW-0500">Molybdenum</keyword>
<keyword id="KW-0560">Oxidoreductase</keyword>
<keyword id="KW-0597">Phosphoprotein</keyword>
<keyword id="KW-1185">Reference proteome</keyword>
<dbReference type="EC" id="1.2.3.1" evidence="1"/>
<dbReference type="EC" id="1.17.3.-"/>
<dbReference type="EMBL" id="X87251">
    <property type="protein sequence ID" value="CAA60701.1"/>
    <property type="molecule type" value="mRNA"/>
</dbReference>
<dbReference type="EMBL" id="BC105265">
    <property type="protein sequence ID" value="AAI05266.1"/>
    <property type="molecule type" value="mRNA"/>
</dbReference>
<dbReference type="PIR" id="S46980">
    <property type="entry name" value="S46980"/>
</dbReference>
<dbReference type="RefSeq" id="NP_788841.1">
    <property type="nucleotide sequence ID" value="NM_176668.3"/>
</dbReference>
<dbReference type="SMR" id="P48034"/>
<dbReference type="FunCoup" id="P48034">
    <property type="interactions" value="375"/>
</dbReference>
<dbReference type="STRING" id="9913.ENSBTAP00000059560"/>
<dbReference type="PaxDb" id="9913-ENSBTAP00000012827"/>
<dbReference type="PeptideAtlas" id="P48034"/>
<dbReference type="GeneID" id="338074"/>
<dbReference type="KEGG" id="bta:338074"/>
<dbReference type="CTD" id="316"/>
<dbReference type="eggNOG" id="KOG0430">
    <property type="taxonomic scope" value="Eukaryota"/>
</dbReference>
<dbReference type="InParanoid" id="P48034"/>
<dbReference type="OrthoDB" id="8300278at2759"/>
<dbReference type="BRENDA" id="1.2.3.1">
    <property type="organism ID" value="908"/>
</dbReference>
<dbReference type="Proteomes" id="UP000009136">
    <property type="component" value="Unplaced"/>
</dbReference>
<dbReference type="GO" id="GO:0005829">
    <property type="term" value="C:cytosol"/>
    <property type="evidence" value="ECO:0000250"/>
    <property type="project" value="UniProtKB"/>
</dbReference>
<dbReference type="GO" id="GO:0051537">
    <property type="term" value="F:2 iron, 2 sulfur cluster binding"/>
    <property type="evidence" value="ECO:0000250"/>
    <property type="project" value="UniProtKB"/>
</dbReference>
<dbReference type="GO" id="GO:0004031">
    <property type="term" value="F:aldehyde oxidase activity"/>
    <property type="evidence" value="ECO:0000250"/>
    <property type="project" value="UniProtKB"/>
</dbReference>
<dbReference type="GO" id="GO:0071949">
    <property type="term" value="F:FAD binding"/>
    <property type="evidence" value="ECO:0007669"/>
    <property type="project" value="InterPro"/>
</dbReference>
<dbReference type="GO" id="GO:0050660">
    <property type="term" value="F:flavin adenine dinucleotide binding"/>
    <property type="evidence" value="ECO:0000250"/>
    <property type="project" value="UniProtKB"/>
</dbReference>
<dbReference type="GO" id="GO:0005506">
    <property type="term" value="F:iron ion binding"/>
    <property type="evidence" value="ECO:0000250"/>
    <property type="project" value="UniProtKB"/>
</dbReference>
<dbReference type="GO" id="GO:0043546">
    <property type="term" value="F:molybdopterin cofactor binding"/>
    <property type="evidence" value="ECO:0000250"/>
    <property type="project" value="UniProtKB"/>
</dbReference>
<dbReference type="GO" id="GO:0051287">
    <property type="term" value="F:NAD binding"/>
    <property type="evidence" value="ECO:0007669"/>
    <property type="project" value="InterPro"/>
</dbReference>
<dbReference type="GO" id="GO:0042803">
    <property type="term" value="F:protein homodimerization activity"/>
    <property type="evidence" value="ECO:0000250"/>
    <property type="project" value="UniProtKB"/>
</dbReference>
<dbReference type="GO" id="GO:0006629">
    <property type="term" value="P:lipid metabolic process"/>
    <property type="evidence" value="ECO:0007669"/>
    <property type="project" value="UniProtKB-KW"/>
</dbReference>
<dbReference type="GO" id="GO:0006805">
    <property type="term" value="P:xenobiotic metabolic process"/>
    <property type="evidence" value="ECO:0000250"/>
    <property type="project" value="UniProtKB"/>
</dbReference>
<dbReference type="FunFam" id="1.10.150.120:FF:000001">
    <property type="entry name" value="Aldehyde oxidase 1"/>
    <property type="match status" value="1"/>
</dbReference>
<dbReference type="FunFam" id="3.10.20.30:FF:000015">
    <property type="entry name" value="Aldehyde oxidase 1"/>
    <property type="match status" value="1"/>
</dbReference>
<dbReference type="FunFam" id="3.30.365.10:FF:000003">
    <property type="entry name" value="Aldehyde oxidase 1"/>
    <property type="match status" value="1"/>
</dbReference>
<dbReference type="FunFam" id="3.90.1170.50:FF:000001">
    <property type="entry name" value="Aldehyde oxidase 1"/>
    <property type="match status" value="1"/>
</dbReference>
<dbReference type="FunFam" id="3.30.365.10:FF:000001">
    <property type="entry name" value="Xanthine dehydrogenase oxidase"/>
    <property type="match status" value="1"/>
</dbReference>
<dbReference type="FunFam" id="3.30.365.10:FF:000004">
    <property type="entry name" value="Xanthine dehydrogenase oxidase"/>
    <property type="match status" value="1"/>
</dbReference>
<dbReference type="FunFam" id="3.30.390.50:FF:000001">
    <property type="entry name" value="Xanthine dehydrogenase oxidase"/>
    <property type="match status" value="1"/>
</dbReference>
<dbReference type="FunFam" id="3.30.43.10:FF:000001">
    <property type="entry name" value="Xanthine dehydrogenase/oxidase"/>
    <property type="match status" value="1"/>
</dbReference>
<dbReference type="FunFam" id="3.30.465.10:FF:000004">
    <property type="entry name" value="Xanthine dehydrogenase/oxidase"/>
    <property type="match status" value="1"/>
</dbReference>
<dbReference type="Gene3D" id="3.10.20.30">
    <property type="match status" value="1"/>
</dbReference>
<dbReference type="Gene3D" id="3.30.465.10">
    <property type="match status" value="1"/>
</dbReference>
<dbReference type="Gene3D" id="1.10.150.120">
    <property type="entry name" value="[2Fe-2S]-binding domain"/>
    <property type="match status" value="1"/>
</dbReference>
<dbReference type="Gene3D" id="3.90.1170.50">
    <property type="entry name" value="Aldehyde oxidase/xanthine dehydrogenase, a/b hammerhead"/>
    <property type="match status" value="1"/>
</dbReference>
<dbReference type="Gene3D" id="3.30.365.10">
    <property type="entry name" value="Aldehyde oxidase/xanthine dehydrogenase, molybdopterin binding domain"/>
    <property type="match status" value="4"/>
</dbReference>
<dbReference type="Gene3D" id="3.30.390.50">
    <property type="entry name" value="CO dehydrogenase flavoprotein, C-terminal domain"/>
    <property type="match status" value="1"/>
</dbReference>
<dbReference type="Gene3D" id="3.30.43.10">
    <property type="entry name" value="Uridine Diphospho-n-acetylenolpyruvylglucosamine Reductase, domain 2"/>
    <property type="match status" value="1"/>
</dbReference>
<dbReference type="InterPro" id="IPR002888">
    <property type="entry name" value="2Fe-2S-bd"/>
</dbReference>
<dbReference type="InterPro" id="IPR036884">
    <property type="entry name" value="2Fe-2S-bd_dom_sf"/>
</dbReference>
<dbReference type="InterPro" id="IPR036010">
    <property type="entry name" value="2Fe-2S_ferredoxin-like_sf"/>
</dbReference>
<dbReference type="InterPro" id="IPR001041">
    <property type="entry name" value="2Fe-2S_ferredoxin-type"/>
</dbReference>
<dbReference type="InterPro" id="IPR006058">
    <property type="entry name" value="2Fe2S_fd_BS"/>
</dbReference>
<dbReference type="InterPro" id="IPR000674">
    <property type="entry name" value="Ald_Oxase/Xan_DH_a/b"/>
</dbReference>
<dbReference type="InterPro" id="IPR036856">
    <property type="entry name" value="Ald_Oxase/Xan_DH_a/b_sf"/>
</dbReference>
<dbReference type="InterPro" id="IPR016208">
    <property type="entry name" value="Ald_Oxase/xanthine_DH-like"/>
</dbReference>
<dbReference type="InterPro" id="IPR014313">
    <property type="entry name" value="Aldehyde_oxidase"/>
</dbReference>
<dbReference type="InterPro" id="IPR008274">
    <property type="entry name" value="AldOxase/xan_DH_MoCoBD1"/>
</dbReference>
<dbReference type="InterPro" id="IPR046867">
    <property type="entry name" value="AldOxase/xan_DH_MoCoBD2"/>
</dbReference>
<dbReference type="InterPro" id="IPR037165">
    <property type="entry name" value="AldOxase/xan_DH_Mopterin-bd_sf"/>
</dbReference>
<dbReference type="InterPro" id="IPR012675">
    <property type="entry name" value="Beta-grasp_dom_sf"/>
</dbReference>
<dbReference type="InterPro" id="IPR005107">
    <property type="entry name" value="CO_DH_flav_C"/>
</dbReference>
<dbReference type="InterPro" id="IPR036683">
    <property type="entry name" value="CO_DH_flav_C_dom_sf"/>
</dbReference>
<dbReference type="InterPro" id="IPR016166">
    <property type="entry name" value="FAD-bd_PCMH"/>
</dbReference>
<dbReference type="InterPro" id="IPR036318">
    <property type="entry name" value="FAD-bd_PCMH-like_sf"/>
</dbReference>
<dbReference type="InterPro" id="IPR016167">
    <property type="entry name" value="FAD-bd_PCMH_sub1"/>
</dbReference>
<dbReference type="InterPro" id="IPR016169">
    <property type="entry name" value="FAD-bd_PCMH_sub2"/>
</dbReference>
<dbReference type="InterPro" id="IPR002346">
    <property type="entry name" value="Mopterin_DH_FAD-bd"/>
</dbReference>
<dbReference type="InterPro" id="IPR022407">
    <property type="entry name" value="OxRdtase_Mopterin_BS"/>
</dbReference>
<dbReference type="NCBIfam" id="TIGR02969">
    <property type="entry name" value="mam_aldehyde_ox"/>
    <property type="match status" value="1"/>
</dbReference>
<dbReference type="PANTHER" id="PTHR45444">
    <property type="entry name" value="XANTHINE DEHYDROGENASE"/>
    <property type="match status" value="1"/>
</dbReference>
<dbReference type="PANTHER" id="PTHR45444:SF3">
    <property type="entry name" value="XANTHINE DEHYDROGENASE"/>
    <property type="match status" value="1"/>
</dbReference>
<dbReference type="Pfam" id="PF01315">
    <property type="entry name" value="Ald_Xan_dh_C"/>
    <property type="match status" value="1"/>
</dbReference>
<dbReference type="Pfam" id="PF03450">
    <property type="entry name" value="CO_deh_flav_C"/>
    <property type="match status" value="1"/>
</dbReference>
<dbReference type="Pfam" id="PF00941">
    <property type="entry name" value="FAD_binding_5"/>
    <property type="match status" value="1"/>
</dbReference>
<dbReference type="Pfam" id="PF00111">
    <property type="entry name" value="Fer2"/>
    <property type="match status" value="1"/>
</dbReference>
<dbReference type="Pfam" id="PF01799">
    <property type="entry name" value="Fer2_2"/>
    <property type="match status" value="1"/>
</dbReference>
<dbReference type="Pfam" id="PF02738">
    <property type="entry name" value="MoCoBD_1"/>
    <property type="match status" value="1"/>
</dbReference>
<dbReference type="Pfam" id="PF20256">
    <property type="entry name" value="MoCoBD_2"/>
    <property type="match status" value="1"/>
</dbReference>
<dbReference type="PIRSF" id="PIRSF000127">
    <property type="entry name" value="Xanthine_DH"/>
    <property type="match status" value="1"/>
</dbReference>
<dbReference type="SMART" id="SM01008">
    <property type="entry name" value="Ald_Xan_dh_C"/>
    <property type="match status" value="1"/>
</dbReference>
<dbReference type="SMART" id="SM01092">
    <property type="entry name" value="CO_deh_flav_C"/>
    <property type="match status" value="1"/>
</dbReference>
<dbReference type="SUPFAM" id="SSF54292">
    <property type="entry name" value="2Fe-2S ferredoxin-like"/>
    <property type="match status" value="1"/>
</dbReference>
<dbReference type="SUPFAM" id="SSF55447">
    <property type="entry name" value="CO dehydrogenase flavoprotein C-terminal domain-like"/>
    <property type="match status" value="1"/>
</dbReference>
<dbReference type="SUPFAM" id="SSF47741">
    <property type="entry name" value="CO dehydrogenase ISP C-domain like"/>
    <property type="match status" value="1"/>
</dbReference>
<dbReference type="SUPFAM" id="SSF54665">
    <property type="entry name" value="CO dehydrogenase molybdoprotein N-domain-like"/>
    <property type="match status" value="1"/>
</dbReference>
<dbReference type="SUPFAM" id="SSF56176">
    <property type="entry name" value="FAD-binding/transporter-associated domain-like"/>
    <property type="match status" value="1"/>
</dbReference>
<dbReference type="SUPFAM" id="SSF56003">
    <property type="entry name" value="Molybdenum cofactor-binding domain"/>
    <property type="match status" value="1"/>
</dbReference>
<dbReference type="PROSITE" id="PS00197">
    <property type="entry name" value="2FE2S_FER_1"/>
    <property type="match status" value="1"/>
</dbReference>
<dbReference type="PROSITE" id="PS51085">
    <property type="entry name" value="2FE2S_FER_2"/>
    <property type="match status" value="1"/>
</dbReference>
<dbReference type="PROSITE" id="PS51387">
    <property type="entry name" value="FAD_PCMH"/>
    <property type="match status" value="1"/>
</dbReference>
<dbReference type="PROSITE" id="PS00559">
    <property type="entry name" value="MOLYBDOPTERIN_EUK"/>
    <property type="match status" value="1"/>
</dbReference>
<organism>
    <name type="scientific">Bos taurus</name>
    <name type="common">Bovine</name>
    <dbReference type="NCBI Taxonomy" id="9913"/>
    <lineage>
        <taxon>Eukaryota</taxon>
        <taxon>Metazoa</taxon>
        <taxon>Chordata</taxon>
        <taxon>Craniata</taxon>
        <taxon>Vertebrata</taxon>
        <taxon>Euteleostomi</taxon>
        <taxon>Mammalia</taxon>
        <taxon>Eutheria</taxon>
        <taxon>Laurasiatheria</taxon>
        <taxon>Artiodactyla</taxon>
        <taxon>Ruminantia</taxon>
        <taxon>Pecora</taxon>
        <taxon>Bovidae</taxon>
        <taxon>Bovinae</taxon>
        <taxon>Bos</taxon>
    </lineage>
</organism>
<protein>
    <recommendedName>
        <fullName evidence="2">Aldehyde oxidase 1</fullName>
        <ecNumber evidence="1">1.2.3.1</ecNumber>
    </recommendedName>
    <alternativeName>
        <fullName>Azaheterocycle hydroxylase 1</fullName>
        <ecNumber>1.17.3.-</ecNumber>
    </alternativeName>
</protein>
<sequence length="1339" mass="147611">MEGGSELLFYVNGRKVTEKNVDPETMLLPYLRKKLRLTGTKYGCGGGGCGACTVMISRYNPITKKIRHYPANACLTPICSLYGAAVTTVEGIGSTKTRIHPVQERIAKCHGTQCGFCTPGMVMSLYTLLRNHPEPTLTQLNDALGGNLCRCTGYRPIINACKTFCKTSGCCQSKENGVCCLDQGMNGLPEFEEGNETSLKLFSEEEFLPLDPTQELIFPPELMTMAEKKTQKTRIFGSDRMTWISPVTLKELLEAKVKYPQAPVVMGNTSVGPDMKFKGIFHPVIISPDRIEELSVVNYTDNGLTLGAAVSLAEVKDILANVTRKLPEEKTQMYHALLKHLETLAGPQIRNMASLGGHIVSRHPDSDLNPLLAVGNCTLNLLSKEGRRQIPLNEQFLRKCPSADLKPEEILISVNIPYSRKWEFVSAFRQAQRQQNALAIVNSGMRVCFGKGDGIIRELSIAYGGVGPTTILANNSCQKLIGRPWNEEMLDAACRLILDEVSLPGSAPGGRVEFKRTLIVSFLFKFYLEVSQILKGMDLVHYPSLASKYESALEDLHSRHYWSTLKYQNADLKQLSQDPIGHPIMHLSGIKHATGEAIYCDDMPVVDRELFLTFVTSSRAHAKIVSIDVSAALSLPGVVDILTGEHLPGINTTFGFLTDADQLLSTDEVSCVGQLVCAVIADSEVQARRAAQQVKIVYQDLEPVILTIEEAIQNKSFFEPERKLEYGNVDEAFKMVDQILEGEIHMGGQEHFYMETQSMLVVPKGEDREIDVYVSAQFPKYIQDITASVLKVSANKVMCHVKRVGGAFGGKVTKTGVLAAITAFAANKHGRPVRCILERGEDILITGGRHPYLGKYKAGFMNDGRILALDMEHYNNAGAFLDESLFVIEMGLLKLENAYKFPNLRCRGWACRTNLPSNTALRGFGFPQAGLITEACITEVAAKCGLPPEKVRMINMYKEIDQTPYKQEINTKNLTQCWKECMATSSYTLRKAAVEKFNSENYWKKKGLAMVPLKYPIGLGSVAAGQAAALVHIYLDGSVLVTHGGIEMGQGVHTKMIQVVSRELRMPLSSIHLRGTSTETIPNTNPSGGSVVADLNGLAVKDACQTLLKRLKPIISKNPKGTWKDWAQAAFNESISLSATGYFRGYESNINWETGEGHPFEYFVYGAACSEVEIDCLTGAHKNIRTDIVMDVGYSINPALDVGQIEGAFIQGMGLYTIEELNYSPQGVLYTRGPNQYKIPAICDIPMELHISFLPPSENSNTLYSSKGLGESGIFLGCSVFFAIHDAIRAARQERGLPGPLRLNSPLTPEKIRMACEDKFTKMIPRDEPGSYVPWSVPI</sequence>
<reference key="1">
    <citation type="journal article" date="1995" name="J. Biol. Chem.">
        <title>Purification, cDNA cloning, and tissue distribution of bovine liver aldehyde oxidase.</title>
        <authorList>
            <person name="Calzi M.L."/>
            <person name="Raviolo C."/>
            <person name="Ghibaudi E."/>
            <person name="de Gioia L."/>
            <person name="Salmona M."/>
            <person name="Cazzaniga G."/>
            <person name="Kurosaki M."/>
            <person name="Terao M."/>
            <person name="Garattini E."/>
        </authorList>
    </citation>
    <scope>NUCLEOTIDE SEQUENCE [MRNA]</scope>
    <scope>PROTEIN SEQUENCE OF 43-48; 187-218 AND 538-573</scope>
    <scope>FUNCTION</scope>
    <scope>SUBCELLULAR LOCATION</scope>
    <scope>TISSUE SPECIFICITY</scope>
    <scope>HOMODIMER</scope>
    <scope>BLOCKAGE OF N-TERMINUS</scope>
    <source>
        <tissue>Liver</tissue>
    </source>
</reference>
<reference key="2">
    <citation type="submission" date="2005-09" db="EMBL/GenBank/DDBJ databases">
        <authorList>
            <consortium name="NIH - Mammalian Gene Collection (MGC) project"/>
        </authorList>
    </citation>
    <scope>NUCLEOTIDE SEQUENCE [LARGE SCALE MRNA]</scope>
    <source>
        <strain>Hereford</strain>
        <tissue>Uterus</tissue>
    </source>
</reference>
<reference key="3">
    <citation type="journal article" date="2013" name="Cell. Mol. Life Sci.">
        <title>Structure and evolution of vertebrate aldehyde oxidases: from gene duplication to gene suppression.</title>
        <authorList>
            <person name="Kurosaki M."/>
            <person name="Bolis M."/>
            <person name="Fratelli M."/>
            <person name="Barzago M.M."/>
            <person name="Pattini L."/>
            <person name="Perretta G."/>
            <person name="Terao M."/>
            <person name="Garattini E."/>
        </authorList>
    </citation>
    <scope>IDENTIFICATION OF PARALOGS</scope>
</reference>
<evidence type="ECO:0000250" key="1">
    <source>
        <dbReference type="UniProtKB" id="O54754"/>
    </source>
</evidence>
<evidence type="ECO:0000250" key="2">
    <source>
        <dbReference type="UniProtKB" id="Q06278"/>
    </source>
</evidence>
<evidence type="ECO:0000255" key="3">
    <source>
        <dbReference type="PROSITE-ProRule" id="PRU00465"/>
    </source>
</evidence>
<evidence type="ECO:0000255" key="4">
    <source>
        <dbReference type="PROSITE-ProRule" id="PRU00718"/>
    </source>
</evidence>
<evidence type="ECO:0000269" key="5">
    <source>
    </source>
</evidence>
<evidence type="ECO:0000305" key="6"/>
<evidence type="ECO:0000305" key="7">
    <source>
    </source>
</evidence>
<accession>P48034</accession>
<accession>Q3MHE7</accession>
<feature type="chain" id="PRO_0000166103" description="Aldehyde oxidase 1">
    <location>
        <begin position="1"/>
        <end position="1339"/>
    </location>
</feature>
<feature type="domain" description="2Fe-2S ferredoxin-type" evidence="3">
    <location>
        <begin position="5"/>
        <end position="92"/>
    </location>
</feature>
<feature type="domain" description="FAD-binding PCMH-type" evidence="4">
    <location>
        <begin position="236"/>
        <end position="421"/>
    </location>
</feature>
<feature type="active site" description="Proton acceptor; for azaheterocycle hydroxylase activity" evidence="1">
    <location>
        <position position="1271"/>
    </location>
</feature>
<feature type="binding site" evidence="2">
    <location>
        <position position="44"/>
    </location>
    <ligand>
        <name>[2Fe-2S] cluster</name>
        <dbReference type="ChEBI" id="CHEBI:190135"/>
        <label>1</label>
    </ligand>
</feature>
<feature type="binding site" evidence="2">
    <location>
        <position position="49"/>
    </location>
    <ligand>
        <name>[2Fe-2S] cluster</name>
        <dbReference type="ChEBI" id="CHEBI:190135"/>
        <label>1</label>
    </ligand>
</feature>
<feature type="binding site" evidence="2">
    <location>
        <position position="52"/>
    </location>
    <ligand>
        <name>[2Fe-2S] cluster</name>
        <dbReference type="ChEBI" id="CHEBI:190135"/>
        <label>1</label>
    </ligand>
</feature>
<feature type="binding site" evidence="2">
    <location>
        <position position="74"/>
    </location>
    <ligand>
        <name>[2Fe-2S] cluster</name>
        <dbReference type="ChEBI" id="CHEBI:190135"/>
        <label>1</label>
    </ligand>
</feature>
<feature type="binding site" evidence="2">
    <location>
        <position position="113"/>
    </location>
    <ligand>
        <name>Mo-molybdopterin</name>
        <dbReference type="ChEBI" id="CHEBI:71302"/>
    </ligand>
</feature>
<feature type="binding site" evidence="2">
    <location>
        <position position="114"/>
    </location>
    <ligand>
        <name>[2Fe-2S] cluster</name>
        <dbReference type="ChEBI" id="CHEBI:190135"/>
        <label>2</label>
    </ligand>
</feature>
<feature type="binding site" evidence="2">
    <location>
        <position position="117"/>
    </location>
    <ligand>
        <name>[2Fe-2S] cluster</name>
        <dbReference type="ChEBI" id="CHEBI:190135"/>
        <label>2</label>
    </ligand>
</feature>
<feature type="binding site" evidence="2">
    <location>
        <position position="149"/>
    </location>
    <ligand>
        <name>[2Fe-2S] cluster</name>
        <dbReference type="ChEBI" id="CHEBI:190135"/>
        <label>2</label>
    </ligand>
</feature>
<feature type="binding site" evidence="2">
    <location>
        <position position="151"/>
    </location>
    <ligand>
        <name>[2Fe-2S] cluster</name>
        <dbReference type="ChEBI" id="CHEBI:190135"/>
        <label>2</label>
    </ligand>
</feature>
<feature type="binding site" evidence="2">
    <location>
        <position position="151"/>
    </location>
    <ligand>
        <name>Mo-molybdopterin</name>
        <dbReference type="ChEBI" id="CHEBI:71302"/>
    </ligand>
</feature>
<feature type="binding site" evidence="2">
    <location>
        <begin position="264"/>
        <end position="271"/>
    </location>
    <ligand>
        <name>FAD</name>
        <dbReference type="ChEBI" id="CHEBI:57692"/>
    </ligand>
</feature>
<feature type="binding site" evidence="2">
    <location>
        <position position="345"/>
    </location>
    <ligand>
        <name>FAD</name>
        <dbReference type="ChEBI" id="CHEBI:57692"/>
    </ligand>
</feature>
<feature type="binding site" evidence="2">
    <location>
        <position position="354"/>
    </location>
    <ligand>
        <name>FAD</name>
        <dbReference type="ChEBI" id="CHEBI:57692"/>
    </ligand>
</feature>
<feature type="binding site" evidence="2">
    <location>
        <position position="358"/>
    </location>
    <ligand>
        <name>FAD</name>
        <dbReference type="ChEBI" id="CHEBI:57692"/>
    </ligand>
</feature>
<feature type="binding site" evidence="2">
    <location>
        <position position="367"/>
    </location>
    <ligand>
        <name>FAD</name>
        <dbReference type="ChEBI" id="CHEBI:57692"/>
    </ligand>
</feature>
<feature type="binding site" evidence="2">
    <location>
        <position position="411"/>
    </location>
    <ligand>
        <name>FAD</name>
        <dbReference type="ChEBI" id="CHEBI:57692"/>
    </ligand>
</feature>
<feature type="binding site" evidence="2">
    <location>
        <begin position="807"/>
        <end position="808"/>
    </location>
    <ligand>
        <name>Mo-molybdopterin</name>
        <dbReference type="ChEBI" id="CHEBI:71302"/>
    </ligand>
</feature>
<feature type="binding site" evidence="2">
    <location>
        <position position="1048"/>
    </location>
    <ligand>
        <name>Mo-molybdopterin</name>
        <dbReference type="ChEBI" id="CHEBI:71302"/>
    </ligand>
</feature>
<feature type="binding site" evidence="2">
    <location>
        <begin position="1089"/>
        <end position="1092"/>
    </location>
    <ligand>
        <name>Mo-molybdopterin</name>
        <dbReference type="ChEBI" id="CHEBI:71302"/>
    </ligand>
</feature>
<feature type="binding site" evidence="2">
    <location>
        <position position="1204"/>
    </location>
    <ligand>
        <name>Mo-molybdopterin</name>
        <dbReference type="ChEBI" id="CHEBI:71302"/>
    </ligand>
</feature>
<feature type="binding site" evidence="2">
    <location>
        <position position="1269"/>
    </location>
    <ligand>
        <name>Mo-molybdopterin</name>
        <dbReference type="ChEBI" id="CHEBI:71302"/>
    </ligand>
</feature>
<feature type="modified residue" description="Phosphoserine" evidence="2">
    <location>
        <position position="1069"/>
    </location>
</feature>
<feature type="sequence conflict" description="In Ref. 2; AAI05266." evidence="6" ref="2">
    <original>S</original>
    <variation>A</variation>
    <location>
        <position position="5"/>
    </location>
</feature>
<feature type="sequence conflict" description="In Ref. 2; AAI05266." evidence="6" ref="2">
    <original>M</original>
    <variation>I</variation>
    <location>
        <position position="185"/>
    </location>
</feature>
<feature type="sequence conflict" description="In Ref. 2; AAI05266." evidence="6" ref="2">
    <original>V</original>
    <variation>I</variation>
    <location>
        <position position="804"/>
    </location>
</feature>
<feature type="sequence conflict" description="In Ref. 2; AAI05266." evidence="6" ref="2">
    <original>V</original>
    <variation>A</variation>
    <location>
        <position position="1060"/>
    </location>
</feature>
<gene>
    <name evidence="2" type="primary">AOX1</name>
    <name type="synonym">AO</name>
</gene>
<comment type="function">
    <text evidence="5">Oxidase with broad substrate specificity, oxidizing aromatic azaheterocycles, such as N1-methylnicotinamide, N-methylphthalazinium and phthalazine, as well as aldehydes, such as benzaldehyde, retinal, pyridoxal, and vanillin. Plays a key role in the metabolism of xenobiotics and drugs containing aromatic azaheterocyclic substituents. Is probably involved in the regulation of reactive oxygen species homeostasis. May be a prominent source of superoxide generation via the one-electron reduction of molecular oxygen. May also catalyze nitric oxide (NO) production via the reduction of nitrite to NO with NADH or aldehyde as electron donor. May play a role in adipogenesis.</text>
</comment>
<comment type="catalytic activity">
    <reaction evidence="1">
        <text>an aldehyde + O2 + H2O = a carboxylate + H2O2 + H(+)</text>
        <dbReference type="Rhea" id="RHEA:16829"/>
        <dbReference type="ChEBI" id="CHEBI:15377"/>
        <dbReference type="ChEBI" id="CHEBI:15378"/>
        <dbReference type="ChEBI" id="CHEBI:15379"/>
        <dbReference type="ChEBI" id="CHEBI:16240"/>
        <dbReference type="ChEBI" id="CHEBI:17478"/>
        <dbReference type="ChEBI" id="CHEBI:29067"/>
        <dbReference type="EC" id="1.2.3.1"/>
    </reaction>
</comment>
<comment type="catalytic activity">
    <reaction evidence="1">
        <text>retinal + O2 + H2O = retinoate + H2O2 + H(+)</text>
        <dbReference type="Rhea" id="RHEA:56736"/>
        <dbReference type="ChEBI" id="CHEBI:15035"/>
        <dbReference type="ChEBI" id="CHEBI:15036"/>
        <dbReference type="ChEBI" id="CHEBI:15377"/>
        <dbReference type="ChEBI" id="CHEBI:15378"/>
        <dbReference type="ChEBI" id="CHEBI:15379"/>
        <dbReference type="ChEBI" id="CHEBI:16240"/>
    </reaction>
</comment>
<comment type="cofactor">
    <cofactor evidence="1">
        <name>[2Fe-2S] cluster</name>
        <dbReference type="ChEBI" id="CHEBI:190135"/>
    </cofactor>
    <text evidence="1">Binds 2 [2Fe-2S] clusters per subunit.</text>
</comment>
<comment type="cofactor">
    <cofactor evidence="1">
        <name>FAD</name>
        <dbReference type="ChEBI" id="CHEBI:57692"/>
    </cofactor>
    <text evidence="1">Binds 1 FAD per subunit.</text>
</comment>
<comment type="cofactor">
    <cofactor evidence="1">
        <name>Mo-molybdopterin</name>
        <dbReference type="ChEBI" id="CHEBI:71302"/>
    </cofactor>
    <text evidence="1">Binds 1 Mo-molybdopterin (Mo-MPT) cofactor per subunit.</text>
</comment>
<comment type="subunit">
    <text evidence="2">Homodimer.</text>
</comment>
<comment type="subcellular location">
    <subcellularLocation>
        <location evidence="5">Cytoplasm</location>
    </subcellularLocation>
</comment>
<comment type="tissue specificity">
    <text evidence="5">Expressed at high levels in liver, lung and spleen. Also expressed in kindey, eye, testis, duodenum, esophagus and thymus (at protein level).</text>
</comment>
<comment type="PTM">
    <text>The N-terminus is blocked.</text>
</comment>
<comment type="miscellaneous">
    <text evidence="7">AOX genes evolved from a xanthine oxidoreductase ancestral precursor via a series of gene duplication and suppression/deletion events. Different animal species contain a different complement of AOX genes encoding an equivalent number of AOX isoenzymes. In mammals, the two extremes are represented by certain rodents such as mice and rats, which are endowed with 4 AOX genes, and by humans, whose genome is characterized by a single active gene (PubMed:23263164).</text>
</comment>
<comment type="similarity">
    <text evidence="6">Belongs to the xanthine dehydrogenase family.</text>
</comment>
<proteinExistence type="evidence at protein level"/>
<name>AOXA_BOVIN</name>